<dbReference type="EC" id="3.6.1.1"/>
<dbReference type="EMBL" id="CU329670">
    <property type="protein sequence ID" value="CAB08747.1"/>
    <property type="molecule type" value="Genomic_DNA"/>
</dbReference>
<dbReference type="PIR" id="T38670">
    <property type="entry name" value="T38670"/>
</dbReference>
<dbReference type="SMR" id="P87118"/>
<dbReference type="FunCoup" id="P87118">
    <property type="interactions" value="72"/>
</dbReference>
<dbReference type="STRING" id="284812.P87118"/>
<dbReference type="PaxDb" id="4896-SPAC3A12.02.1"/>
<dbReference type="EnsemblFungi" id="SPAC3A12.02.1">
    <property type="protein sequence ID" value="SPAC3A12.02.1:pep"/>
    <property type="gene ID" value="SPAC3A12.02"/>
</dbReference>
<dbReference type="KEGG" id="spo:2542957"/>
<dbReference type="PomBase" id="SPAC3A12.02"/>
<dbReference type="VEuPathDB" id="FungiDB:SPAC3A12.02"/>
<dbReference type="eggNOG" id="KOG1626">
    <property type="taxonomic scope" value="Eukaryota"/>
</dbReference>
<dbReference type="HOGENOM" id="CLU_040684_0_1_1"/>
<dbReference type="InParanoid" id="P87118"/>
<dbReference type="OMA" id="CASQYNA"/>
<dbReference type="PhylomeDB" id="P87118"/>
<dbReference type="Reactome" id="R-SPO-379726">
    <property type="pathway name" value="Mitochondrial tRNA aminoacylation"/>
</dbReference>
<dbReference type="Reactome" id="R-SPO-71737">
    <property type="pathway name" value="Pyrophosphate hydrolysis"/>
</dbReference>
<dbReference type="PRO" id="PR:P87118"/>
<dbReference type="Proteomes" id="UP000002485">
    <property type="component" value="Chromosome I"/>
</dbReference>
<dbReference type="GO" id="GO:0005739">
    <property type="term" value="C:mitochondrion"/>
    <property type="evidence" value="ECO:0007005"/>
    <property type="project" value="PomBase"/>
</dbReference>
<dbReference type="GO" id="GO:0004427">
    <property type="term" value="F:inorganic diphosphate phosphatase activity"/>
    <property type="evidence" value="ECO:0000318"/>
    <property type="project" value="GO_Central"/>
</dbReference>
<dbReference type="GO" id="GO:0000287">
    <property type="term" value="F:magnesium ion binding"/>
    <property type="evidence" value="ECO:0000250"/>
    <property type="project" value="PomBase"/>
</dbReference>
<dbReference type="GO" id="GO:0006796">
    <property type="term" value="P:phosphate-containing compound metabolic process"/>
    <property type="evidence" value="ECO:0000318"/>
    <property type="project" value="GO_Central"/>
</dbReference>
<dbReference type="CDD" id="cd00412">
    <property type="entry name" value="pyrophosphatase"/>
    <property type="match status" value="1"/>
</dbReference>
<dbReference type="FunFam" id="3.90.80.10:FF:000007">
    <property type="entry name" value="Inorganic pyrophosphatase, mitochondrial"/>
    <property type="match status" value="1"/>
</dbReference>
<dbReference type="Gene3D" id="3.90.80.10">
    <property type="entry name" value="Inorganic pyrophosphatase"/>
    <property type="match status" value="1"/>
</dbReference>
<dbReference type="InterPro" id="IPR008162">
    <property type="entry name" value="Pyrophosphatase"/>
</dbReference>
<dbReference type="InterPro" id="IPR036649">
    <property type="entry name" value="Pyrophosphatase_sf"/>
</dbReference>
<dbReference type="PANTHER" id="PTHR10286">
    <property type="entry name" value="INORGANIC PYROPHOSPHATASE"/>
    <property type="match status" value="1"/>
</dbReference>
<dbReference type="Pfam" id="PF00719">
    <property type="entry name" value="Pyrophosphatase"/>
    <property type="match status" value="1"/>
</dbReference>
<dbReference type="SUPFAM" id="SSF50324">
    <property type="entry name" value="Inorganic pyrophosphatase"/>
    <property type="match status" value="1"/>
</dbReference>
<dbReference type="PROSITE" id="PS00387">
    <property type="entry name" value="PPASE"/>
    <property type="match status" value="1"/>
</dbReference>
<accession>P87118</accession>
<comment type="catalytic activity">
    <reaction>
        <text>diphosphate + H2O = 2 phosphate + H(+)</text>
        <dbReference type="Rhea" id="RHEA:24576"/>
        <dbReference type="ChEBI" id="CHEBI:15377"/>
        <dbReference type="ChEBI" id="CHEBI:15378"/>
        <dbReference type="ChEBI" id="CHEBI:33019"/>
        <dbReference type="ChEBI" id="CHEBI:43474"/>
        <dbReference type="EC" id="3.6.1.1"/>
    </reaction>
</comment>
<comment type="cofactor">
    <cofactor evidence="1">
        <name>Mg(2+)</name>
        <dbReference type="ChEBI" id="CHEBI:18420"/>
    </cofactor>
</comment>
<comment type="subcellular location">
    <subcellularLocation>
        <location evidence="1">Cytoplasm</location>
    </subcellularLocation>
</comment>
<comment type="similarity">
    <text evidence="2">Belongs to the PPase family.</text>
</comment>
<name>IPYR2_SCHPO</name>
<organism>
    <name type="scientific">Schizosaccharomyces pombe (strain 972 / ATCC 24843)</name>
    <name type="common">Fission yeast</name>
    <dbReference type="NCBI Taxonomy" id="284812"/>
    <lineage>
        <taxon>Eukaryota</taxon>
        <taxon>Fungi</taxon>
        <taxon>Dikarya</taxon>
        <taxon>Ascomycota</taxon>
        <taxon>Taphrinomycotina</taxon>
        <taxon>Schizosaccharomycetes</taxon>
        <taxon>Schizosaccharomycetales</taxon>
        <taxon>Schizosaccharomycetaceae</taxon>
        <taxon>Schizosaccharomyces</taxon>
    </lineage>
</organism>
<feature type="chain" id="PRO_0000137590" description="Putative inorganic pyrophosphatase C3A12.02">
    <location>
        <begin position="1"/>
        <end position="286"/>
    </location>
</feature>
<feature type="binding site" evidence="1">
    <location>
        <position position="85"/>
    </location>
    <ligand>
        <name>diphosphate</name>
        <dbReference type="ChEBI" id="CHEBI:33019"/>
    </ligand>
</feature>
<feature type="binding site" evidence="1">
    <location>
        <position position="122"/>
    </location>
    <ligand>
        <name>Mg(2+)</name>
        <dbReference type="ChEBI" id="CHEBI:18420"/>
        <label>1</label>
    </ligand>
</feature>
<feature type="binding site" evidence="1">
    <location>
        <position position="127"/>
    </location>
    <ligand>
        <name>Mg(2+)</name>
        <dbReference type="ChEBI" id="CHEBI:18420"/>
        <label>1</label>
    </ligand>
</feature>
<feature type="binding site" evidence="1">
    <location>
        <position position="127"/>
    </location>
    <ligand>
        <name>Mg(2+)</name>
        <dbReference type="ChEBI" id="CHEBI:18420"/>
        <label>2</label>
    </ligand>
</feature>
<feature type="binding site" evidence="1">
    <location>
        <position position="159"/>
    </location>
    <ligand>
        <name>Mg(2+)</name>
        <dbReference type="ChEBI" id="CHEBI:18420"/>
        <label>1</label>
    </ligand>
</feature>
<sequence length="286" mass="32899">MASLAKNILQFRSKITGKLNTPDFRVYCYKNNKPISFFHDVPLTSDKDTFNMVTEIPRWTQAKCEISLTSPFHPIKQDLKNGKLRYVANSFPYHGFIWNYGALPQTWEDPNVIDSRTKMKGDGDPLDVCEIGGSIGYIGQIKQVKVLGALGLIDQGETDWKILAIDINDPRAKLLNDISDVQNLMPRLLPCTRDWFAIYKIPDGKPKNRFFFDGNYLPKSDALDIIAQCHQHWKVSRDRKQYIKNFHNESVNNVDLINKINSLKEEVSQNVSNYPSFPYFHTIPNL</sequence>
<gene>
    <name type="ORF">SPAC3A12.02</name>
</gene>
<proteinExistence type="inferred from homology"/>
<reference key="1">
    <citation type="journal article" date="2002" name="Nature">
        <title>The genome sequence of Schizosaccharomyces pombe.</title>
        <authorList>
            <person name="Wood V."/>
            <person name="Gwilliam R."/>
            <person name="Rajandream M.A."/>
            <person name="Lyne M.H."/>
            <person name="Lyne R."/>
            <person name="Stewart A."/>
            <person name="Sgouros J.G."/>
            <person name="Peat N."/>
            <person name="Hayles J."/>
            <person name="Baker S.G."/>
            <person name="Basham D."/>
            <person name="Bowman S."/>
            <person name="Brooks K."/>
            <person name="Brown D."/>
            <person name="Brown S."/>
            <person name="Chillingworth T."/>
            <person name="Churcher C.M."/>
            <person name="Collins M."/>
            <person name="Connor R."/>
            <person name="Cronin A."/>
            <person name="Davis P."/>
            <person name="Feltwell T."/>
            <person name="Fraser A."/>
            <person name="Gentles S."/>
            <person name="Goble A."/>
            <person name="Hamlin N."/>
            <person name="Harris D.E."/>
            <person name="Hidalgo J."/>
            <person name="Hodgson G."/>
            <person name="Holroyd S."/>
            <person name="Hornsby T."/>
            <person name="Howarth S."/>
            <person name="Huckle E.J."/>
            <person name="Hunt S."/>
            <person name="Jagels K."/>
            <person name="James K.D."/>
            <person name="Jones L."/>
            <person name="Jones M."/>
            <person name="Leather S."/>
            <person name="McDonald S."/>
            <person name="McLean J."/>
            <person name="Mooney P."/>
            <person name="Moule S."/>
            <person name="Mungall K.L."/>
            <person name="Murphy L.D."/>
            <person name="Niblett D."/>
            <person name="Odell C."/>
            <person name="Oliver K."/>
            <person name="O'Neil S."/>
            <person name="Pearson D."/>
            <person name="Quail M.A."/>
            <person name="Rabbinowitsch E."/>
            <person name="Rutherford K.M."/>
            <person name="Rutter S."/>
            <person name="Saunders D."/>
            <person name="Seeger K."/>
            <person name="Sharp S."/>
            <person name="Skelton J."/>
            <person name="Simmonds M.N."/>
            <person name="Squares R."/>
            <person name="Squares S."/>
            <person name="Stevens K."/>
            <person name="Taylor K."/>
            <person name="Taylor R.G."/>
            <person name="Tivey A."/>
            <person name="Walsh S.V."/>
            <person name="Warren T."/>
            <person name="Whitehead S."/>
            <person name="Woodward J.R."/>
            <person name="Volckaert G."/>
            <person name="Aert R."/>
            <person name="Robben J."/>
            <person name="Grymonprez B."/>
            <person name="Weltjens I."/>
            <person name="Vanstreels E."/>
            <person name="Rieger M."/>
            <person name="Schaefer M."/>
            <person name="Mueller-Auer S."/>
            <person name="Gabel C."/>
            <person name="Fuchs M."/>
            <person name="Duesterhoeft A."/>
            <person name="Fritzc C."/>
            <person name="Holzer E."/>
            <person name="Moestl D."/>
            <person name="Hilbert H."/>
            <person name="Borzym K."/>
            <person name="Langer I."/>
            <person name="Beck A."/>
            <person name="Lehrach H."/>
            <person name="Reinhardt R."/>
            <person name="Pohl T.M."/>
            <person name="Eger P."/>
            <person name="Zimmermann W."/>
            <person name="Wedler H."/>
            <person name="Wambutt R."/>
            <person name="Purnelle B."/>
            <person name="Goffeau A."/>
            <person name="Cadieu E."/>
            <person name="Dreano S."/>
            <person name="Gloux S."/>
            <person name="Lelaure V."/>
            <person name="Mottier S."/>
            <person name="Galibert F."/>
            <person name="Aves S.J."/>
            <person name="Xiang Z."/>
            <person name="Hunt C."/>
            <person name="Moore K."/>
            <person name="Hurst S.M."/>
            <person name="Lucas M."/>
            <person name="Rochet M."/>
            <person name="Gaillardin C."/>
            <person name="Tallada V.A."/>
            <person name="Garzon A."/>
            <person name="Thode G."/>
            <person name="Daga R.R."/>
            <person name="Cruzado L."/>
            <person name="Jimenez J."/>
            <person name="Sanchez M."/>
            <person name="del Rey F."/>
            <person name="Benito J."/>
            <person name="Dominguez A."/>
            <person name="Revuelta J.L."/>
            <person name="Moreno S."/>
            <person name="Armstrong J."/>
            <person name="Forsburg S.L."/>
            <person name="Cerutti L."/>
            <person name="Lowe T."/>
            <person name="McCombie W.R."/>
            <person name="Paulsen I."/>
            <person name="Potashkin J."/>
            <person name="Shpakovski G.V."/>
            <person name="Ussery D."/>
            <person name="Barrell B.G."/>
            <person name="Nurse P."/>
        </authorList>
    </citation>
    <scope>NUCLEOTIDE SEQUENCE [LARGE SCALE GENOMIC DNA]</scope>
    <source>
        <strain>972 / ATCC 24843</strain>
    </source>
</reference>
<keyword id="KW-0963">Cytoplasm</keyword>
<keyword id="KW-0378">Hydrolase</keyword>
<keyword id="KW-0460">Magnesium</keyword>
<keyword id="KW-0479">Metal-binding</keyword>
<keyword id="KW-1185">Reference proteome</keyword>
<protein>
    <recommendedName>
        <fullName>Putative inorganic pyrophosphatase C3A12.02</fullName>
        <ecNumber>3.6.1.1</ecNumber>
    </recommendedName>
    <alternativeName>
        <fullName>Pyrophosphate phosphohydrolase</fullName>
        <shortName>PPase</shortName>
    </alternativeName>
</protein>
<evidence type="ECO:0000250" key="1"/>
<evidence type="ECO:0000305" key="2"/>